<keyword id="KW-0456">Lyase</keyword>
<keyword id="KW-0460">Magnesium</keyword>
<keyword id="KW-0479">Metal-binding</keyword>
<sequence>MKITNITTYRLPPRWMFLKIETDEGIVGWGEPVIEGRARTVEAAVHEFGDYLIGQDPARINDLWQVMYRGGFYRGGPIMMSAIAGIDQALWDIKGKVLNAPVWQLMGGLVRDKIKAYSWVGGDRPAEVIDGIKKLRGIGFDTFKLNGCEEMGIIDNSRAVDAAVNTVAQIREAFGNEIEFGLDFHGRVSAPMAKVLIKELEPYRPLFIEEPVLAEQAEYYPRLAAQTHIPIAAGERMFSRFEFKRVLEAGGVAILQPDLSHAGGITECYKIAGMAEAYDVGLAPHCPLGPIALAACLHVDFVSHNAVFQEQSMGIHYNKGAELLDFVKNKEDFNMEGGFFKPLMKPGLGVEIDEARVIELSKNAPDWRNPLWRYEDGSVAEW</sequence>
<reference key="1">
    <citation type="submission" date="2006-09" db="EMBL/GenBank/DDBJ databases">
        <authorList>
            <consortium name="The Klebsiella pneumonia Genome Sequencing Project"/>
            <person name="McClelland M."/>
            <person name="Sanderson E.K."/>
            <person name="Spieth J."/>
            <person name="Clifton W.S."/>
            <person name="Latreille P."/>
            <person name="Sabo A."/>
            <person name="Pepin K."/>
            <person name="Bhonagiri V."/>
            <person name="Porwollik S."/>
            <person name="Ali J."/>
            <person name="Wilson R.K."/>
        </authorList>
    </citation>
    <scope>NUCLEOTIDE SEQUENCE [LARGE SCALE GENOMIC DNA]</scope>
    <source>
        <strain>ATCC 700721 / MGH 78578</strain>
    </source>
</reference>
<name>DGOD_KLEP7</name>
<organism>
    <name type="scientific">Klebsiella pneumoniae subsp. pneumoniae (strain ATCC 700721 / MGH 78578)</name>
    <dbReference type="NCBI Taxonomy" id="272620"/>
    <lineage>
        <taxon>Bacteria</taxon>
        <taxon>Pseudomonadati</taxon>
        <taxon>Pseudomonadota</taxon>
        <taxon>Gammaproteobacteria</taxon>
        <taxon>Enterobacterales</taxon>
        <taxon>Enterobacteriaceae</taxon>
        <taxon>Klebsiella/Raoultella group</taxon>
        <taxon>Klebsiella</taxon>
        <taxon>Klebsiella pneumoniae complex</taxon>
    </lineage>
</organism>
<dbReference type="EC" id="4.2.1.6" evidence="2"/>
<dbReference type="EMBL" id="CP000647">
    <property type="protein sequence ID" value="ABR79478.1"/>
    <property type="molecule type" value="Genomic_DNA"/>
</dbReference>
<dbReference type="RefSeq" id="WP_004150286.1">
    <property type="nucleotide sequence ID" value="NC_009648.1"/>
</dbReference>
<dbReference type="SMR" id="A6TFZ4"/>
<dbReference type="STRING" id="272620.KPN_04095"/>
<dbReference type="PaxDb" id="272620-KPN_04095"/>
<dbReference type="EnsemblBacteria" id="ABR79478">
    <property type="protein sequence ID" value="ABR79478"/>
    <property type="gene ID" value="KPN_04095"/>
</dbReference>
<dbReference type="KEGG" id="kpn:KPN_04095"/>
<dbReference type="HOGENOM" id="CLU_030273_3_2_6"/>
<dbReference type="UniPathway" id="UPA00081">
    <property type="reaction ID" value="UER00518"/>
</dbReference>
<dbReference type="Proteomes" id="UP000000265">
    <property type="component" value="Chromosome"/>
</dbReference>
<dbReference type="GO" id="GO:0008869">
    <property type="term" value="F:galactonate dehydratase activity"/>
    <property type="evidence" value="ECO:0007669"/>
    <property type="project" value="UniProtKB-UniRule"/>
</dbReference>
<dbReference type="GO" id="GO:0000287">
    <property type="term" value="F:magnesium ion binding"/>
    <property type="evidence" value="ECO:0007669"/>
    <property type="project" value="UniProtKB-UniRule"/>
</dbReference>
<dbReference type="GO" id="GO:0009063">
    <property type="term" value="P:amino acid catabolic process"/>
    <property type="evidence" value="ECO:0007669"/>
    <property type="project" value="InterPro"/>
</dbReference>
<dbReference type="GO" id="GO:0034194">
    <property type="term" value="P:D-galactonate catabolic process"/>
    <property type="evidence" value="ECO:0007669"/>
    <property type="project" value="UniProtKB-UniRule"/>
</dbReference>
<dbReference type="CDD" id="cd03325">
    <property type="entry name" value="D-galactonate_dehydratase"/>
    <property type="match status" value="1"/>
</dbReference>
<dbReference type="FunFam" id="3.20.20.120:FF:000008">
    <property type="entry name" value="D-galactonate dehydratase"/>
    <property type="match status" value="1"/>
</dbReference>
<dbReference type="FunFam" id="3.30.390.10:FF:000003">
    <property type="entry name" value="D-galactonate dehydratase"/>
    <property type="match status" value="1"/>
</dbReference>
<dbReference type="Gene3D" id="3.20.20.120">
    <property type="entry name" value="Enolase-like C-terminal domain"/>
    <property type="match status" value="1"/>
</dbReference>
<dbReference type="Gene3D" id="3.30.390.10">
    <property type="entry name" value="Enolase-like, N-terminal domain"/>
    <property type="match status" value="1"/>
</dbReference>
<dbReference type="HAMAP" id="MF_01289">
    <property type="entry name" value="Galacton_dehydrat"/>
    <property type="match status" value="1"/>
</dbReference>
<dbReference type="InterPro" id="IPR034593">
    <property type="entry name" value="DgoD-like"/>
</dbReference>
<dbReference type="InterPro" id="IPR036849">
    <property type="entry name" value="Enolase-like_C_sf"/>
</dbReference>
<dbReference type="InterPro" id="IPR029017">
    <property type="entry name" value="Enolase-like_N"/>
</dbReference>
<dbReference type="InterPro" id="IPR029065">
    <property type="entry name" value="Enolase_C-like"/>
</dbReference>
<dbReference type="InterPro" id="IPR023592">
    <property type="entry name" value="Galactonate_deHydtase"/>
</dbReference>
<dbReference type="InterPro" id="IPR018110">
    <property type="entry name" value="Mandel_Rmase/mucon_lact_enz_CS"/>
</dbReference>
<dbReference type="InterPro" id="IPR013342">
    <property type="entry name" value="Mandelate_racemase_C"/>
</dbReference>
<dbReference type="InterPro" id="IPR013341">
    <property type="entry name" value="Mandelate_racemase_N_dom"/>
</dbReference>
<dbReference type="NCBIfam" id="NF010624">
    <property type="entry name" value="PRK14017.1"/>
    <property type="match status" value="1"/>
</dbReference>
<dbReference type="PANTHER" id="PTHR48080:SF2">
    <property type="entry name" value="D-GALACTONATE DEHYDRATASE"/>
    <property type="match status" value="1"/>
</dbReference>
<dbReference type="PANTHER" id="PTHR48080">
    <property type="entry name" value="D-GALACTONATE DEHYDRATASE-RELATED"/>
    <property type="match status" value="1"/>
</dbReference>
<dbReference type="Pfam" id="PF13378">
    <property type="entry name" value="MR_MLE_C"/>
    <property type="match status" value="1"/>
</dbReference>
<dbReference type="Pfam" id="PF02746">
    <property type="entry name" value="MR_MLE_N"/>
    <property type="match status" value="1"/>
</dbReference>
<dbReference type="SFLD" id="SFLDF00003">
    <property type="entry name" value="D-galactonate_dehydratase"/>
    <property type="match status" value="1"/>
</dbReference>
<dbReference type="SFLD" id="SFLDS00001">
    <property type="entry name" value="Enolase"/>
    <property type="match status" value="1"/>
</dbReference>
<dbReference type="SMART" id="SM00922">
    <property type="entry name" value="MR_MLE"/>
    <property type="match status" value="1"/>
</dbReference>
<dbReference type="SUPFAM" id="SSF51604">
    <property type="entry name" value="Enolase C-terminal domain-like"/>
    <property type="match status" value="1"/>
</dbReference>
<dbReference type="SUPFAM" id="SSF54826">
    <property type="entry name" value="Enolase N-terminal domain-like"/>
    <property type="match status" value="1"/>
</dbReference>
<dbReference type="PROSITE" id="PS00908">
    <property type="entry name" value="MR_MLE_1"/>
    <property type="match status" value="1"/>
</dbReference>
<dbReference type="PROSITE" id="PS00909">
    <property type="entry name" value="MR_MLE_2"/>
    <property type="match status" value="1"/>
</dbReference>
<protein>
    <recommendedName>
        <fullName evidence="2">D-galactonate dehydratase</fullName>
        <shortName evidence="2">GalD</shortName>
        <ecNumber evidence="2">4.2.1.6</ecNumber>
    </recommendedName>
</protein>
<gene>
    <name evidence="2" type="primary">dgoD</name>
    <name type="ordered locus">KPN78578_40540</name>
    <name type="ORF">KPN_04095</name>
</gene>
<proteinExistence type="inferred from homology"/>
<evidence type="ECO:0000250" key="1"/>
<evidence type="ECO:0000255" key="2">
    <source>
        <dbReference type="HAMAP-Rule" id="MF_01289"/>
    </source>
</evidence>
<accession>A6TFZ4</accession>
<comment type="function">
    <text evidence="2">Catalyzes the dehydration of D-galactonate to 2-keto-3-deoxy-D-galactonate.</text>
</comment>
<comment type="catalytic activity">
    <reaction evidence="2">
        <text>D-galactonate = 2-dehydro-3-deoxy-D-galactonate + H2O</text>
        <dbReference type="Rhea" id="RHEA:18649"/>
        <dbReference type="ChEBI" id="CHEBI:12931"/>
        <dbReference type="ChEBI" id="CHEBI:15377"/>
        <dbReference type="ChEBI" id="CHEBI:57989"/>
        <dbReference type="EC" id="4.2.1.6"/>
    </reaction>
</comment>
<comment type="cofactor">
    <cofactor evidence="2">
        <name>Mg(2+)</name>
        <dbReference type="ChEBI" id="CHEBI:18420"/>
    </cofactor>
    <text evidence="2">Binds 1 Mg(2+) ion per subunit.</text>
</comment>
<comment type="pathway">
    <text evidence="2">Carbohydrate acid metabolism; D-galactonate degradation; D-glyceraldehyde 3-phosphate and pyruvate from D-galactonate: step 1/3.</text>
</comment>
<comment type="miscellaneous">
    <text evidence="2">Reaction proceeds via an anti dehydration.</text>
</comment>
<comment type="similarity">
    <text evidence="2">Belongs to the mandelate racemase/muconate lactonizing enzyme family. GalD subfamily.</text>
</comment>
<feature type="chain" id="PRO_0000352631" description="D-galactonate dehydratase">
    <location>
        <begin position="1"/>
        <end position="382"/>
    </location>
</feature>
<feature type="active site" description="Proton donor" evidence="1">
    <location>
        <position position="185"/>
    </location>
</feature>
<feature type="active site" description="Proton acceptor" evidence="1">
    <location>
        <position position="285"/>
    </location>
</feature>
<feature type="binding site" evidence="2">
    <location>
        <position position="183"/>
    </location>
    <ligand>
        <name>Mg(2+)</name>
        <dbReference type="ChEBI" id="CHEBI:18420"/>
    </ligand>
</feature>
<feature type="binding site" evidence="2">
    <location>
        <position position="209"/>
    </location>
    <ligand>
        <name>Mg(2+)</name>
        <dbReference type="ChEBI" id="CHEBI:18420"/>
    </ligand>
</feature>
<feature type="binding site" evidence="2">
    <location>
        <position position="235"/>
    </location>
    <ligand>
        <name>Mg(2+)</name>
        <dbReference type="ChEBI" id="CHEBI:18420"/>
    </ligand>
</feature>
<feature type="site" description="Increases basicity of active site His" evidence="2">
    <location>
        <position position="258"/>
    </location>
</feature>
<feature type="site" description="Transition state stabilizer" evidence="2">
    <location>
        <position position="310"/>
    </location>
</feature>